<keyword id="KW-1003">Cell membrane</keyword>
<keyword id="KW-0472">Membrane</keyword>
<keyword id="KW-1185">Reference proteome</keyword>
<keyword id="KW-0762">Sugar transport</keyword>
<keyword id="KW-0769">Symport</keyword>
<keyword id="KW-0812">Transmembrane</keyword>
<keyword id="KW-1133">Transmembrane helix</keyword>
<keyword id="KW-0813">Transport</keyword>
<reference key="1">
    <citation type="journal article" date="2003" name="Plant Cell Physiol.">
        <title>The sucrose transporter gene family in rice.</title>
        <authorList>
            <person name="Aoki N."/>
            <person name="Hirose T."/>
            <person name="Scofield G.N."/>
            <person name="Whitfeld P.R."/>
            <person name="Furbank R.T."/>
        </authorList>
    </citation>
    <scope>NUCLEOTIDE SEQUENCE [GENOMIC DNA]</scope>
    <source>
        <strain>cv. IR36</strain>
    </source>
</reference>
<reference key="2">
    <citation type="submission" date="2010-03" db="EMBL/GenBank/DDBJ databases">
        <title>Rice sucrose transporter 1.</title>
        <authorList>
            <person name="Kato T."/>
            <person name="Horibata A."/>
        </authorList>
    </citation>
    <scope>NUCLEOTIDE SEQUENCE [GENOMIC DNA]</scope>
    <source>
        <strain>cv. Milyang 23</strain>
    </source>
</reference>
<reference key="3">
    <citation type="journal article" date="2002" name="Nature">
        <title>Sequence and analysis of rice chromosome 4.</title>
        <authorList>
            <person name="Feng Q."/>
            <person name="Zhang Y."/>
            <person name="Hao P."/>
            <person name="Wang S."/>
            <person name="Fu G."/>
            <person name="Huang Y."/>
            <person name="Li Y."/>
            <person name="Zhu J."/>
            <person name="Liu Y."/>
            <person name="Hu X."/>
            <person name="Jia P."/>
            <person name="Zhang Y."/>
            <person name="Zhao Q."/>
            <person name="Ying K."/>
            <person name="Yu S."/>
            <person name="Tang Y."/>
            <person name="Weng Q."/>
            <person name="Zhang L."/>
            <person name="Lu Y."/>
            <person name="Mu J."/>
            <person name="Lu Y."/>
            <person name="Zhang L.S."/>
            <person name="Yu Z."/>
            <person name="Fan D."/>
            <person name="Liu X."/>
            <person name="Lu T."/>
            <person name="Li C."/>
            <person name="Wu Y."/>
            <person name="Sun T."/>
            <person name="Lei H."/>
            <person name="Li T."/>
            <person name="Hu H."/>
            <person name="Guan J."/>
            <person name="Wu M."/>
            <person name="Zhang R."/>
            <person name="Zhou B."/>
            <person name="Chen Z."/>
            <person name="Chen L."/>
            <person name="Jin Z."/>
            <person name="Wang R."/>
            <person name="Yin H."/>
            <person name="Cai Z."/>
            <person name="Ren S."/>
            <person name="Lv G."/>
            <person name="Gu W."/>
            <person name="Zhu G."/>
            <person name="Tu Y."/>
            <person name="Jia J."/>
            <person name="Zhang Y."/>
            <person name="Chen J."/>
            <person name="Kang H."/>
            <person name="Chen X."/>
            <person name="Shao C."/>
            <person name="Sun Y."/>
            <person name="Hu Q."/>
            <person name="Zhang X."/>
            <person name="Zhang W."/>
            <person name="Wang L."/>
            <person name="Ding C."/>
            <person name="Sheng H."/>
            <person name="Gu J."/>
            <person name="Chen S."/>
            <person name="Ni L."/>
            <person name="Zhu F."/>
            <person name="Chen W."/>
            <person name="Lan L."/>
            <person name="Lai Y."/>
            <person name="Cheng Z."/>
            <person name="Gu M."/>
            <person name="Jiang J."/>
            <person name="Li J."/>
            <person name="Hong G."/>
            <person name="Xue Y."/>
            <person name="Han B."/>
        </authorList>
    </citation>
    <scope>NUCLEOTIDE SEQUENCE [LARGE SCALE GENOMIC DNA]</scope>
    <source>
        <strain>cv. Guang-Lu-Ai No.4</strain>
    </source>
</reference>
<accession>Q9LKH3</accession>
<evidence type="ECO:0000250" key="1"/>
<evidence type="ECO:0000255" key="2"/>
<evidence type="ECO:0000305" key="3"/>
<feature type="chain" id="PRO_0000398188" description="Sucrose transport protein SUT1">
    <location>
        <begin position="1"/>
        <end position="538"/>
    </location>
</feature>
<feature type="topological domain" description="Cytoplasmic" evidence="2">
    <location>
        <begin position="1"/>
        <end position="52"/>
    </location>
</feature>
<feature type="transmembrane region" description="Helical" evidence="2">
    <location>
        <begin position="53"/>
        <end position="73"/>
    </location>
</feature>
<feature type="topological domain" description="Extracellular" evidence="2">
    <location>
        <begin position="74"/>
        <end position="81"/>
    </location>
</feature>
<feature type="transmembrane region" description="Helical" evidence="2">
    <location>
        <begin position="82"/>
        <end position="102"/>
    </location>
</feature>
<feature type="topological domain" description="Cytoplasmic" evidence="2">
    <location>
        <begin position="103"/>
        <end position="123"/>
    </location>
</feature>
<feature type="transmembrane region" description="Helical" evidence="2">
    <location>
        <begin position="124"/>
        <end position="144"/>
    </location>
</feature>
<feature type="topological domain" description="Extracellular" evidence="2">
    <location>
        <begin position="145"/>
        <end position="162"/>
    </location>
</feature>
<feature type="transmembrane region" description="Helical" evidence="2">
    <location>
        <begin position="163"/>
        <end position="183"/>
    </location>
</feature>
<feature type="topological domain" description="Cytoplasmic" evidence="2">
    <location>
        <begin position="184"/>
        <end position="198"/>
    </location>
</feature>
<feature type="transmembrane region" description="Helical" evidence="2">
    <location>
        <begin position="199"/>
        <end position="219"/>
    </location>
</feature>
<feature type="topological domain" description="Extracellular" evidence="2">
    <location>
        <begin position="220"/>
        <end position="247"/>
    </location>
</feature>
<feature type="transmembrane region" description="Helical" evidence="2">
    <location>
        <begin position="248"/>
        <end position="268"/>
    </location>
</feature>
<feature type="topological domain" description="Cytoplasmic" evidence="2">
    <location>
        <begin position="269"/>
        <end position="306"/>
    </location>
</feature>
<feature type="transmembrane region" description="Helical" evidence="2">
    <location>
        <begin position="307"/>
        <end position="327"/>
    </location>
</feature>
<feature type="topological domain" description="Extracellular" evidence="2">
    <location>
        <begin position="328"/>
        <end position="357"/>
    </location>
</feature>
<feature type="transmembrane region" description="Helical" evidence="2">
    <location>
        <begin position="358"/>
        <end position="378"/>
    </location>
</feature>
<feature type="topological domain" description="Cytoplasmic" evidence="2">
    <location>
        <begin position="379"/>
        <end position="388"/>
    </location>
</feature>
<feature type="transmembrane region" description="Helical" evidence="2">
    <location>
        <begin position="389"/>
        <end position="409"/>
    </location>
</feature>
<feature type="topological domain" description="Extracellular" evidence="2">
    <location>
        <begin position="410"/>
        <end position="433"/>
    </location>
</feature>
<feature type="transmembrane region" description="Helical" evidence="2">
    <location>
        <begin position="434"/>
        <end position="454"/>
    </location>
</feature>
<feature type="topological domain" description="Cytoplasmic" evidence="2">
    <location>
        <begin position="455"/>
        <end position="470"/>
    </location>
</feature>
<feature type="transmembrane region" description="Helical" evidence="2">
    <location>
        <begin position="471"/>
        <end position="491"/>
    </location>
</feature>
<feature type="topological domain" description="Extracellular" evidence="2">
    <location>
        <begin position="492"/>
        <end position="499"/>
    </location>
</feature>
<feature type="transmembrane region" description="Helical" evidence="2">
    <location>
        <begin position="500"/>
        <end position="520"/>
    </location>
</feature>
<feature type="topological domain" description="Cytoplasmic" evidence="2">
    <location>
        <begin position="521"/>
        <end position="538"/>
    </location>
</feature>
<sequence>MARGSGAGGGGGGGGGGLELSVGVGGGGGARGGGGGEAAAAVETAAPISLGRLILSGMVAGGVQYGWALQLSLLTPYVQTLGLSHALTSFMWLCGPIAGMVVQPCVGLYSDRCTSKWGRRRPYILTGCVLICLAVVVIGFSADIGYAMGDTKEDCSVYHGSRWHAAIVYVLGFWLLDFSNNTVQGPARALMADLSGRHGPGTANSIFCSWMAMGNILGYSSGSTNNWHKWFPFLKTRACCEACANLKGAFLVAVIFLSLCLVITLIFAKEVPFKGNAALPTKSNEPAEPEGTGPLAVLKGFRNLPTGMPSVLIVTGLTWLSWFPFILYDTDWMGREIYHGDPKGTDPQIEAFNQGVRAGAFGLLLNSIVLGFSSFLIEPMCRKVGPRVVWVTSNFLVCIAMAATALISFWSLKDFHGTVQKAITADKSIKAVCLVLFAFLGVPLAVLYSVPFAVTAQLAATRGGGQGLCTGVLNISIVIPQVVIALGAGPWDELFGKGNIPAFGLASGFALIGGVAGIFLLPKISKRQFRSVSMGGGH</sequence>
<protein>
    <recommendedName>
        <fullName>Sucrose transport protein SUT1</fullName>
    </recommendedName>
    <alternativeName>
        <fullName>Sucrose permease 1</fullName>
    </alternativeName>
    <alternativeName>
        <fullName>Sucrose transporter 1</fullName>
        <shortName>OsSUT1</shortName>
    </alternativeName>
    <alternativeName>
        <fullName>Sucrose-proton symporter 1</fullName>
    </alternativeName>
</protein>
<organism>
    <name type="scientific">Oryza sativa subsp. indica</name>
    <name type="common">Rice</name>
    <dbReference type="NCBI Taxonomy" id="39946"/>
    <lineage>
        <taxon>Eukaryota</taxon>
        <taxon>Viridiplantae</taxon>
        <taxon>Streptophyta</taxon>
        <taxon>Embryophyta</taxon>
        <taxon>Tracheophyta</taxon>
        <taxon>Spermatophyta</taxon>
        <taxon>Magnoliopsida</taxon>
        <taxon>Liliopsida</taxon>
        <taxon>Poales</taxon>
        <taxon>Poaceae</taxon>
        <taxon>BOP clade</taxon>
        <taxon>Oryzoideae</taxon>
        <taxon>Oryzeae</taxon>
        <taxon>Oryzinae</taxon>
        <taxon>Oryza</taxon>
        <taxon>Oryza sativa</taxon>
    </lineage>
</organism>
<dbReference type="EMBL" id="AF280050">
    <property type="protein sequence ID" value="AAF90181.1"/>
    <property type="molecule type" value="Genomic_DNA"/>
</dbReference>
<dbReference type="EMBL" id="AB551389">
    <property type="protein sequence ID" value="BAI83443.1"/>
    <property type="molecule type" value="Genomic_DNA"/>
</dbReference>
<dbReference type="EMBL" id="CM000128">
    <property type="protein sequence ID" value="EEC74602.1"/>
    <property type="molecule type" value="Genomic_DNA"/>
</dbReference>
<dbReference type="SMR" id="Q9LKH3"/>
<dbReference type="STRING" id="39946.Q9LKH3"/>
<dbReference type="EnsemblPlants" id="BGIOSGA011365-TA">
    <property type="protein sequence ID" value="BGIOSGA011365-PA"/>
    <property type="gene ID" value="BGIOSGA011365"/>
</dbReference>
<dbReference type="EnsemblPlants" id="OsIR64_03g0005230.02">
    <property type="protein sequence ID" value="OsIR64_03g0005230.02"/>
    <property type="gene ID" value="OsIR64_03g0005230"/>
</dbReference>
<dbReference type="EnsemblPlants" id="OsKYG_03g0005320.01">
    <property type="protein sequence ID" value="OsKYG_03g0005320.01"/>
    <property type="gene ID" value="OsKYG_03g0005320"/>
</dbReference>
<dbReference type="EnsemblPlants" id="OsLaMu_03g0005300.04">
    <property type="protein sequence ID" value="OsLaMu_03g0005300.04"/>
    <property type="gene ID" value="OsLaMu_03g0005300"/>
</dbReference>
<dbReference type="EnsemblPlants" id="OsLima_03g0005320.02">
    <property type="protein sequence ID" value="OsLima_03g0005320.02"/>
    <property type="gene ID" value="OsLima_03g0005320"/>
</dbReference>
<dbReference type="EnsemblPlants" id="OsLiXu_03g0005320.01">
    <property type="protein sequence ID" value="OsLiXu_03g0005320.01"/>
    <property type="gene ID" value="OsLiXu_03g0005320"/>
</dbReference>
<dbReference type="EnsemblPlants" id="OsMH63_03G005260_02">
    <property type="protein sequence ID" value="OsMH63_03G005260_02"/>
    <property type="gene ID" value="OsMH63_03G005260"/>
</dbReference>
<dbReference type="EnsemblPlants" id="OsPr106_03g0005340.03">
    <property type="protein sequence ID" value="OsPr106_03g0005340.03"/>
    <property type="gene ID" value="OsPr106_03g0005340"/>
</dbReference>
<dbReference type="EnsemblPlants" id="OsZS97_03G005150_01">
    <property type="protein sequence ID" value="OsZS97_03G005150_01"/>
    <property type="gene ID" value="OsZS97_03G005150"/>
</dbReference>
<dbReference type="Gramene" id="BGIOSGA011365-TA">
    <property type="protein sequence ID" value="BGIOSGA011365-PA"/>
    <property type="gene ID" value="BGIOSGA011365"/>
</dbReference>
<dbReference type="Gramene" id="OsIR64_03g0005230.02">
    <property type="protein sequence ID" value="OsIR64_03g0005230.02"/>
    <property type="gene ID" value="OsIR64_03g0005230"/>
</dbReference>
<dbReference type="Gramene" id="OsKYG_03g0005320.01">
    <property type="protein sequence ID" value="OsKYG_03g0005320.01"/>
    <property type="gene ID" value="OsKYG_03g0005320"/>
</dbReference>
<dbReference type="Gramene" id="OsLaMu_03g0005300.04">
    <property type="protein sequence ID" value="OsLaMu_03g0005300.04"/>
    <property type="gene ID" value="OsLaMu_03g0005300"/>
</dbReference>
<dbReference type="Gramene" id="OsLima_03g0005320.02">
    <property type="protein sequence ID" value="OsLima_03g0005320.02"/>
    <property type="gene ID" value="OsLima_03g0005320"/>
</dbReference>
<dbReference type="Gramene" id="OsLiXu_03g0005320.01">
    <property type="protein sequence ID" value="OsLiXu_03g0005320.01"/>
    <property type="gene ID" value="OsLiXu_03g0005320"/>
</dbReference>
<dbReference type="Gramene" id="OsMH63_03G005260_02">
    <property type="protein sequence ID" value="OsMH63_03G005260_02"/>
    <property type="gene ID" value="OsMH63_03G005260"/>
</dbReference>
<dbReference type="Gramene" id="OsPr106_03g0005340.03">
    <property type="protein sequence ID" value="OsPr106_03g0005340.03"/>
    <property type="gene ID" value="OsPr106_03g0005340"/>
</dbReference>
<dbReference type="Gramene" id="OsZS97_03G005150_01">
    <property type="protein sequence ID" value="OsZS97_03G005150_01"/>
    <property type="gene ID" value="OsZS97_03G005150"/>
</dbReference>
<dbReference type="HOGENOM" id="CLU_025234_3_0_1"/>
<dbReference type="OMA" id="IYTTIPQ"/>
<dbReference type="UniPathway" id="UPA00238"/>
<dbReference type="Proteomes" id="UP000007015">
    <property type="component" value="Chromosome 3"/>
</dbReference>
<dbReference type="GO" id="GO:0005886">
    <property type="term" value="C:plasma membrane"/>
    <property type="evidence" value="ECO:0007669"/>
    <property type="project" value="UniProtKB-SubCell"/>
</dbReference>
<dbReference type="GO" id="GO:0005364">
    <property type="term" value="F:maltose:proton symporter activity"/>
    <property type="evidence" value="ECO:0007669"/>
    <property type="project" value="EnsemblPlants"/>
</dbReference>
<dbReference type="GO" id="GO:0042950">
    <property type="term" value="F:salicin transmembrane transporter activity"/>
    <property type="evidence" value="ECO:0007669"/>
    <property type="project" value="EnsemblPlants"/>
</dbReference>
<dbReference type="GO" id="GO:0008506">
    <property type="term" value="F:sucrose:proton symporter activity"/>
    <property type="evidence" value="ECO:0007669"/>
    <property type="project" value="EnsemblPlants"/>
</dbReference>
<dbReference type="GO" id="GO:0009846">
    <property type="term" value="P:pollen germination"/>
    <property type="evidence" value="ECO:0007669"/>
    <property type="project" value="EnsemblPlants"/>
</dbReference>
<dbReference type="GO" id="GO:0005985">
    <property type="term" value="P:sucrose metabolic process"/>
    <property type="evidence" value="ECO:0007669"/>
    <property type="project" value="UniProtKB-UniPathway"/>
</dbReference>
<dbReference type="CDD" id="cd17313">
    <property type="entry name" value="MFS_SLC45_SUC"/>
    <property type="match status" value="1"/>
</dbReference>
<dbReference type="FunFam" id="1.20.1250.20:FF:000366">
    <property type="entry name" value="Sucrose transport protein SUT5"/>
    <property type="match status" value="1"/>
</dbReference>
<dbReference type="FunFam" id="1.20.1250.20:FF:000182">
    <property type="entry name" value="Sucrose transporter SUC2"/>
    <property type="match status" value="1"/>
</dbReference>
<dbReference type="Gene3D" id="1.20.1250.20">
    <property type="entry name" value="MFS general substrate transporter like domains"/>
    <property type="match status" value="2"/>
</dbReference>
<dbReference type="InterPro" id="IPR036259">
    <property type="entry name" value="MFS_trans_sf"/>
</dbReference>
<dbReference type="InterPro" id="IPR005989">
    <property type="entry name" value="Suc_symporter_pln"/>
</dbReference>
<dbReference type="NCBIfam" id="TIGR01301">
    <property type="entry name" value="GPH_sucrose"/>
    <property type="match status" value="1"/>
</dbReference>
<dbReference type="PANTHER" id="PTHR19432:SF64">
    <property type="entry name" value="SUCROSE TRANSPORT PROTEIN SUT1"/>
    <property type="match status" value="1"/>
</dbReference>
<dbReference type="PANTHER" id="PTHR19432">
    <property type="entry name" value="SUGAR TRANSPORTER"/>
    <property type="match status" value="1"/>
</dbReference>
<dbReference type="Pfam" id="PF13347">
    <property type="entry name" value="MFS_2"/>
    <property type="match status" value="1"/>
</dbReference>
<dbReference type="SUPFAM" id="SSF103473">
    <property type="entry name" value="MFS general substrate transporter"/>
    <property type="match status" value="1"/>
</dbReference>
<comment type="function">
    <text evidence="1">Responsible for the transport of sucrose into the cell, with the concomitant uptake of protons (symport system). May also transport other glucosides. May be required for apoplastic phloem sucrose loading in source tissues (e.g. leaves) in order to transport it to sink tissues (e.g. roots, flowers) (By similarity).</text>
</comment>
<comment type="pathway">
    <text>Glycan biosynthesis; sucrose metabolism.</text>
</comment>
<comment type="subunit">
    <text evidence="1">Homodimer.</text>
</comment>
<comment type="subcellular location">
    <subcellularLocation>
        <location evidence="3">Cell membrane</location>
        <topology evidence="3">Multi-pass membrane protein</topology>
    </subcellularLocation>
</comment>
<comment type="similarity">
    <text evidence="3">Belongs to the glycoside-pentoside-hexuronide (GPH) cation symporter transporter (TC 2.A.2.4) family.</text>
</comment>
<proteinExistence type="inferred from homology"/>
<name>SUT1_ORYSI</name>
<gene>
    <name type="primary">SUT1</name>
    <name type="ORF">OsI_10195</name>
</gene>